<reference key="1">
    <citation type="journal article" date="2006" name="Proc. Natl. Acad. Sci. U.S.A.">
        <title>Identification of genes subject to positive selection in uropathogenic strains of Escherichia coli: a comparative genomics approach.</title>
        <authorList>
            <person name="Chen S.L."/>
            <person name="Hung C.-S."/>
            <person name="Xu J."/>
            <person name="Reigstad C.S."/>
            <person name="Magrini V."/>
            <person name="Sabo A."/>
            <person name="Blasiar D."/>
            <person name="Bieri T."/>
            <person name="Meyer R.R."/>
            <person name="Ozersky P."/>
            <person name="Armstrong J.R."/>
            <person name="Fulton R.S."/>
            <person name="Latreille J.P."/>
            <person name="Spieth J."/>
            <person name="Hooton T.M."/>
            <person name="Mardis E.R."/>
            <person name="Hultgren S.J."/>
            <person name="Gordon J.I."/>
        </authorList>
    </citation>
    <scope>NUCLEOTIDE SEQUENCE [LARGE SCALE GENOMIC DNA]</scope>
    <source>
        <strain>UTI89 / UPEC</strain>
    </source>
</reference>
<organism>
    <name type="scientific">Escherichia coli (strain UTI89 / UPEC)</name>
    <dbReference type="NCBI Taxonomy" id="364106"/>
    <lineage>
        <taxon>Bacteria</taxon>
        <taxon>Pseudomonadati</taxon>
        <taxon>Pseudomonadota</taxon>
        <taxon>Gammaproteobacteria</taxon>
        <taxon>Enterobacterales</taxon>
        <taxon>Enterobacteriaceae</taxon>
        <taxon>Escherichia</taxon>
    </lineage>
</organism>
<feature type="chain" id="PRO_1000065653" description="Undecaprenyl-phosphate 4-deoxy-4-formamido-L-arabinose transferase">
    <location>
        <begin position="1"/>
        <end position="322"/>
    </location>
</feature>
<feature type="topological domain" description="Cytoplasmic" evidence="1">
    <location>
        <begin position="1"/>
        <end position="235"/>
    </location>
</feature>
<feature type="transmembrane region" description="Helical" evidence="1">
    <location>
        <begin position="236"/>
        <end position="256"/>
    </location>
</feature>
<feature type="topological domain" description="Periplasmic" evidence="1">
    <location>
        <begin position="257"/>
        <end position="269"/>
    </location>
</feature>
<feature type="transmembrane region" description="Helical" evidence="1">
    <location>
        <begin position="270"/>
        <end position="290"/>
    </location>
</feature>
<feature type="topological domain" description="Cytoplasmic" evidence="1">
    <location>
        <begin position="291"/>
        <end position="322"/>
    </location>
</feature>
<gene>
    <name evidence="1" type="primary">arnC</name>
    <name type="ordered locus">UTI89_C2536</name>
</gene>
<name>ARNC_ECOUT</name>
<comment type="function">
    <text evidence="1">Catalyzes the transfer of 4-deoxy-4-formamido-L-arabinose from UDP to undecaprenyl phosphate. The modified arabinose is attached to lipid A and is required for resistance to polymyxin and cationic antimicrobial peptides.</text>
</comment>
<comment type="catalytic activity">
    <reaction evidence="1">
        <text>UDP-4-deoxy-4-formamido-beta-L-arabinose + di-trans,octa-cis-undecaprenyl phosphate = 4-deoxy-4-formamido-alpha-L-arabinopyranosyl di-trans,octa-cis-undecaprenyl phosphate + UDP</text>
        <dbReference type="Rhea" id="RHEA:27722"/>
        <dbReference type="ChEBI" id="CHEBI:58223"/>
        <dbReference type="ChEBI" id="CHEBI:58709"/>
        <dbReference type="ChEBI" id="CHEBI:58909"/>
        <dbReference type="ChEBI" id="CHEBI:60392"/>
        <dbReference type="EC" id="2.4.2.53"/>
    </reaction>
</comment>
<comment type="pathway">
    <text evidence="1">Glycolipid biosynthesis; 4-amino-4-deoxy-alpha-L-arabinose undecaprenyl phosphate biosynthesis; 4-amino-4-deoxy-alpha-L-arabinose undecaprenyl phosphate from UDP-4-deoxy-4-formamido-beta-L-arabinose and undecaprenyl phosphate: step 1/2.</text>
</comment>
<comment type="pathway">
    <text evidence="1">Bacterial outer membrane biogenesis; lipopolysaccharide biosynthesis.</text>
</comment>
<comment type="subcellular location">
    <subcellularLocation>
        <location evidence="1">Cell inner membrane</location>
        <topology evidence="1">Multi-pass membrane protein</topology>
    </subcellularLocation>
</comment>
<comment type="similarity">
    <text evidence="1">Belongs to the glycosyltransferase 2 family.</text>
</comment>
<keyword id="KW-0046">Antibiotic resistance</keyword>
<keyword id="KW-0997">Cell inner membrane</keyword>
<keyword id="KW-1003">Cell membrane</keyword>
<keyword id="KW-0328">Glycosyltransferase</keyword>
<keyword id="KW-0441">Lipid A biosynthesis</keyword>
<keyword id="KW-0444">Lipid biosynthesis</keyword>
<keyword id="KW-0443">Lipid metabolism</keyword>
<keyword id="KW-0448">Lipopolysaccharide biosynthesis</keyword>
<keyword id="KW-0472">Membrane</keyword>
<keyword id="KW-0808">Transferase</keyword>
<keyword id="KW-0812">Transmembrane</keyword>
<keyword id="KW-1133">Transmembrane helix</keyword>
<dbReference type="EC" id="2.4.2.53" evidence="1"/>
<dbReference type="EMBL" id="CP000243">
    <property type="protein sequence ID" value="ABE08003.1"/>
    <property type="molecule type" value="Genomic_DNA"/>
</dbReference>
<dbReference type="RefSeq" id="WP_000461633.1">
    <property type="nucleotide sequence ID" value="NZ_CP064825.1"/>
</dbReference>
<dbReference type="SMR" id="Q1R9G1"/>
<dbReference type="CAZy" id="GT2">
    <property type="family name" value="Glycosyltransferase Family 2"/>
</dbReference>
<dbReference type="KEGG" id="eci:UTI89_C2536"/>
<dbReference type="HOGENOM" id="CLU_033536_0_0_6"/>
<dbReference type="UniPathway" id="UPA00030"/>
<dbReference type="UniPathway" id="UPA00036">
    <property type="reaction ID" value="UER00495"/>
</dbReference>
<dbReference type="Proteomes" id="UP000001952">
    <property type="component" value="Chromosome"/>
</dbReference>
<dbReference type="GO" id="GO:0005886">
    <property type="term" value="C:plasma membrane"/>
    <property type="evidence" value="ECO:0007669"/>
    <property type="project" value="UniProtKB-SubCell"/>
</dbReference>
<dbReference type="GO" id="GO:0016780">
    <property type="term" value="F:phosphotransferase activity, for other substituted phosphate groups"/>
    <property type="evidence" value="ECO:0007669"/>
    <property type="project" value="UniProtKB-UniRule"/>
</dbReference>
<dbReference type="GO" id="GO:0099621">
    <property type="term" value="F:undecaprenyl-phosphate 4-deoxy-4-formamido-L-arabinose transferase activity"/>
    <property type="evidence" value="ECO:0007669"/>
    <property type="project" value="UniProtKB-EC"/>
</dbReference>
<dbReference type="GO" id="GO:0036108">
    <property type="term" value="P:4-amino-4-deoxy-alpha-L-arabinopyranosyl undecaprenyl phosphate biosynthetic process"/>
    <property type="evidence" value="ECO:0007669"/>
    <property type="project" value="UniProtKB-UniRule"/>
</dbReference>
<dbReference type="GO" id="GO:0009245">
    <property type="term" value="P:lipid A biosynthetic process"/>
    <property type="evidence" value="ECO:0007669"/>
    <property type="project" value="UniProtKB-UniRule"/>
</dbReference>
<dbReference type="GO" id="GO:0009103">
    <property type="term" value="P:lipopolysaccharide biosynthetic process"/>
    <property type="evidence" value="ECO:0007669"/>
    <property type="project" value="UniProtKB-UniRule"/>
</dbReference>
<dbReference type="GO" id="GO:0046677">
    <property type="term" value="P:response to antibiotic"/>
    <property type="evidence" value="ECO:0007669"/>
    <property type="project" value="UniProtKB-KW"/>
</dbReference>
<dbReference type="CDD" id="cd04187">
    <property type="entry name" value="DPM1_like_bac"/>
    <property type="match status" value="1"/>
</dbReference>
<dbReference type="FunFam" id="3.90.550.10:FF:000019">
    <property type="entry name" value="Undecaprenyl-phosphate 4-deoxy-4-formamido-L-arabinose transferase"/>
    <property type="match status" value="1"/>
</dbReference>
<dbReference type="Gene3D" id="3.90.550.10">
    <property type="entry name" value="Spore Coat Polysaccharide Biosynthesis Protein SpsA, Chain A"/>
    <property type="match status" value="1"/>
</dbReference>
<dbReference type="HAMAP" id="MF_01164">
    <property type="entry name" value="ArnC_transfer"/>
    <property type="match status" value="1"/>
</dbReference>
<dbReference type="InterPro" id="IPR022857">
    <property type="entry name" value="ArnC_tfrase"/>
</dbReference>
<dbReference type="InterPro" id="IPR001173">
    <property type="entry name" value="Glyco_trans_2-like"/>
</dbReference>
<dbReference type="InterPro" id="IPR050256">
    <property type="entry name" value="Glycosyltransferase_2"/>
</dbReference>
<dbReference type="InterPro" id="IPR029044">
    <property type="entry name" value="Nucleotide-diphossugar_trans"/>
</dbReference>
<dbReference type="NCBIfam" id="NF007986">
    <property type="entry name" value="PRK10714.1"/>
    <property type="match status" value="1"/>
</dbReference>
<dbReference type="PANTHER" id="PTHR48090:SF3">
    <property type="entry name" value="UNDECAPRENYL-PHOSPHATE 4-DEOXY-4-FORMAMIDO-L-ARABINOSE TRANSFERASE"/>
    <property type="match status" value="1"/>
</dbReference>
<dbReference type="PANTHER" id="PTHR48090">
    <property type="entry name" value="UNDECAPRENYL-PHOSPHATE 4-DEOXY-4-FORMAMIDO-L-ARABINOSE TRANSFERASE-RELATED"/>
    <property type="match status" value="1"/>
</dbReference>
<dbReference type="Pfam" id="PF00535">
    <property type="entry name" value="Glycos_transf_2"/>
    <property type="match status" value="1"/>
</dbReference>
<dbReference type="SUPFAM" id="SSF53448">
    <property type="entry name" value="Nucleotide-diphospho-sugar transferases"/>
    <property type="match status" value="1"/>
</dbReference>
<sequence>MFEIHPVKKVSVVIPVYNEQESLPELIRRTTAACESLGKEYEILLIDDGSSDNSAHMLVEASQAEGSHIVSILLNRNYGQHSAIMAGFSHVTGDLIITLDADLQNPPEEIPRLVAKADEGYDVVGTVRQNRQDSWFRKTASKMINRLIQRTTGKAMGDYGCMLRAYRRHIVDAMLHCHERSTFIPILANIFARRAIEIPVHHAEREFGESKYSFMRLINLMYDLVTCLTTTPLRMLSLLGSIIAIGGFSIAVLLVILRLTFGPQWAAEGVFMLFAVLFTFIGAQFIGMGLLGEYIGRIYTDVRARPRYFVQQVIRPSSKENE</sequence>
<protein>
    <recommendedName>
        <fullName evidence="1">Undecaprenyl-phosphate 4-deoxy-4-formamido-L-arabinose transferase</fullName>
        <ecNumber evidence="1">2.4.2.53</ecNumber>
    </recommendedName>
    <alternativeName>
        <fullName evidence="1">Undecaprenyl-phosphate Ara4FN transferase</fullName>
        <shortName evidence="1">Ara4FN transferase</shortName>
    </alternativeName>
</protein>
<proteinExistence type="inferred from homology"/>
<accession>Q1R9G1</accession>
<evidence type="ECO:0000255" key="1">
    <source>
        <dbReference type="HAMAP-Rule" id="MF_01164"/>
    </source>
</evidence>